<comment type="function">
    <text evidence="8 10 11">Interferon-induced dynamin-like GTPase with antiviral activity against rabies virus (RABV), vesicular stomatitis virus (VSV) and murine pneumonia virus (MPV). Isoform 1 but not isoform 2 shows antiviral activity against vesicular stomatitis virus (VSV).</text>
</comment>
<comment type="subunit">
    <text evidence="1">Homooligomer. Oligomerizes into multimeric filamentous or ring-like structures by virtue of its stalk domain. Oligomerization is critical for GTPase activity, protein stability, and recognition of viral target structures (By similarity). Interacts with TRPC1, TRPC3, TRPC4, TRPC5, TRPC6 and TRPC7 (By similarity). Interacts with HSPA5 (By similarity). Interacts with TUBB/TUBB5 (By similarity). Interacts with DDX39A and DDX39B (By similarity).</text>
</comment>
<comment type="subcellular location">
    <subcellularLocation>
        <location evidence="10">Cytoplasm</location>
    </subcellularLocation>
    <subcellularLocation>
        <location evidence="2">Endoplasmic reticulum membrane</location>
        <topology evidence="2">Peripheral membrane protein</topology>
        <orientation evidence="2">Cytoplasmic side</orientation>
    </subcellularLocation>
    <subcellularLocation>
        <location evidence="2">Cytoplasm</location>
        <location evidence="2">Perinuclear region</location>
    </subcellularLocation>
    <text evidence="2">Binds preferentially to negatively charged phospholipids. Colocalizes with CCHFV protein N in the perinuclear region.</text>
</comment>
<comment type="subcellular location">
    <molecule>Isoform 2</molecule>
    <subcellularLocation>
        <location evidence="10">Nucleus</location>
    </subcellularLocation>
</comment>
<comment type="alternative products">
    <event type="alternative splicing"/>
    <isoform>
        <id>P79135-1</id>
        <name>1</name>
        <name>Mx1A</name>
        <sequence type="displayed"/>
    </isoform>
    <isoform>
        <id>P79135-2</id>
        <name>2</name>
        <name>Mx1B</name>
        <sequence type="described" ref="VSP_031549"/>
    </isoform>
</comment>
<comment type="tissue specificity">
    <text evidence="7">Ubiquitously expressed.</text>
</comment>
<comment type="induction">
    <text evidence="9 12">By type I and type III interferons.</text>
</comment>
<comment type="domain">
    <text evidence="1">The C-terminal GTPase effector domain (GED) is involved in oligomerization and viral target recognition.</text>
</comment>
<comment type="domain">
    <text evidence="1">The middle domain mediates self-assembly and oligomerization.</text>
</comment>
<comment type="PTM">
    <text evidence="1">ISGylated.</text>
</comment>
<comment type="similarity">
    <text evidence="5">Belongs to the TRAFAC class dynamin-like GTPase superfamily. Dynamin/Fzo/YdjA family.</text>
</comment>
<reference key="1">
    <citation type="journal article" date="1998" name="J. Interferon Cytokine Res.">
        <title>Cloning and characterization of cDNAs for a bovine (Bos taurus) Mx protein.</title>
        <authorList>
            <person name="Ellinwood N.M."/>
            <person name="McCue J.M."/>
            <person name="Gordy P.W."/>
            <person name="Bowen R.A."/>
        </authorList>
    </citation>
    <scope>NUCLEOTIDE SEQUENCE [MRNA] (ISOFORM 1)</scope>
    <scope>INDUCTION</scope>
    <scope>VARIANT VAL-ARG-GLU-HIS-GLU-THR-24 INS</scope>
    <source>
        <tissue>Endometrium</tissue>
    </source>
</reference>
<reference key="2">
    <citation type="journal article" date="2003" name="Biochem. Genet.">
        <title>The bovine Mx1 gene: characterization of the gene structure, alternative splicing, and promoter region.</title>
        <authorList>
            <person name="Kojima T."/>
            <person name="Oshima K."/>
            <person name="Watanabe H."/>
            <person name="Komatsu M."/>
        </authorList>
    </citation>
    <scope>NUCLEOTIDE SEQUENCE [MRNA] (ISOFORM 2)</scope>
    <scope>VARIANT MET-120</scope>
    <scope>TISSUE SPECIFICITY</scope>
    <source>
        <tissue>Endometrium</tissue>
    </source>
</reference>
<reference key="3">
    <citation type="journal article" date="2004" name="Gene">
        <title>Genomic structure, organisation, and promoter analysis of the bovine (Bos taurus) Mx1 gene.</title>
        <authorList>
            <person name="Gerardin J.A."/>
            <person name="Baise E.A."/>
            <person name="Pire G.A."/>
            <person name="Leroy M.P.-P."/>
            <person name="Desmecht D.J.-M."/>
        </authorList>
    </citation>
    <scope>NUCLEOTIDE SEQUENCE [GENOMIC DNA]</scope>
    <source>
        <strain>Holstein</strain>
    </source>
</reference>
<reference key="4">
    <citation type="submission" date="2006-06" db="EMBL/GenBank/DDBJ databases">
        <authorList>
            <consortium name="NIH - Mammalian Gene Collection (MGC) project"/>
        </authorList>
    </citation>
    <scope>NUCLEOTIDE SEQUENCE [LARGE SCALE MRNA] (ISOFORM 1)</scope>
    <source>
        <strain>Hereford</strain>
        <tissue>Uterus</tissue>
    </source>
</reference>
<reference key="5">
    <citation type="journal article" date="2006" name="Neurobiol. Dis.">
        <title>Expression of the interferon-alpha/beta-inducible bovine Mx1 dynamin interferes with replication of rabies virus.</title>
        <authorList>
            <person name="Leroy M."/>
            <person name="Pire G."/>
            <person name="Baise E."/>
            <person name="Desmecht D."/>
        </authorList>
    </citation>
    <scope>FUNCTION</scope>
</reference>
<reference key="6">
    <citation type="journal article" date="2007" name="Microbes Infect.">
        <title>The Mx GTPase family of interferon-induced antiviral proteins.</title>
        <authorList>
            <person name="Haller O."/>
            <person name="Stertz S."/>
            <person name="Kochs G."/>
        </authorList>
    </citation>
    <scope>REVIEW</scope>
    <scope>INDUCTION</scope>
</reference>
<reference key="7">
    <citation type="journal article" date="2009" name="Viral Immunol.">
        <title>Specific intracellular localization and antiviral property of genetic and splicing variants in bovine Mx1.</title>
        <authorList>
            <person name="Yamada K."/>
            <person name="Nakatsu Y."/>
            <person name="Onogi A."/>
            <person name="Ueda J."/>
            <person name="Watanabe T."/>
        </authorList>
    </citation>
    <scope>ALTERNATIVE SPLICING (ISOFORM 2)</scope>
    <scope>VARIANT MET-120</scope>
    <scope>FUNCTION</scope>
    <scope>SUBCELLULAR LOCATION</scope>
</reference>
<reference key="8">
    <citation type="journal article" date="2012" name="J. Interferon Cytokine Res.">
        <title>In vivo modulation of the innate response to pneumovirus by type-I and -III interferon-induced bos taurus Mx1.</title>
        <authorList>
            <person name="Dermine M."/>
            <person name="Desmecht D."/>
        </authorList>
    </citation>
    <scope>FUNCTION</scope>
</reference>
<proteinExistence type="evidence at transcript level"/>
<keyword id="KW-0007">Acetylation</keyword>
<keyword id="KW-0025">Alternative splicing</keyword>
<keyword id="KW-0051">Antiviral defense</keyword>
<keyword id="KW-0963">Cytoplasm</keyword>
<keyword id="KW-0256">Endoplasmic reticulum</keyword>
<keyword id="KW-0342">GTP-binding</keyword>
<keyword id="KW-0391">Immunity</keyword>
<keyword id="KW-0399">Innate immunity</keyword>
<keyword id="KW-0472">Membrane</keyword>
<keyword id="KW-0547">Nucleotide-binding</keyword>
<keyword id="KW-0539">Nucleus</keyword>
<keyword id="KW-1185">Reference proteome</keyword>
<keyword id="KW-0832">Ubl conjugation</keyword>
<evidence type="ECO:0000250" key="1"/>
<evidence type="ECO:0000250" key="2">
    <source>
        <dbReference type="UniProtKB" id="P20591"/>
    </source>
</evidence>
<evidence type="ECO:0000255" key="3"/>
<evidence type="ECO:0000255" key="4">
    <source>
        <dbReference type="PROSITE-ProRule" id="PRU00720"/>
    </source>
</evidence>
<evidence type="ECO:0000255" key="5">
    <source>
        <dbReference type="PROSITE-ProRule" id="PRU01055"/>
    </source>
</evidence>
<evidence type="ECO:0000256" key="6">
    <source>
        <dbReference type="SAM" id="MobiDB-lite"/>
    </source>
</evidence>
<evidence type="ECO:0000269" key="7">
    <source>
    </source>
</evidence>
<evidence type="ECO:0000269" key="8">
    <source>
    </source>
</evidence>
<evidence type="ECO:0000269" key="9">
    <source>
    </source>
</evidence>
<evidence type="ECO:0000269" key="10">
    <source>
    </source>
</evidence>
<evidence type="ECO:0000269" key="11">
    <source>
    </source>
</evidence>
<evidence type="ECO:0000269" key="12">
    <source>
    </source>
</evidence>
<evidence type="ECO:0000303" key="13">
    <source>
    </source>
</evidence>
<evidence type="ECO:0000305" key="14"/>
<name>MX1_BOVIN</name>
<gene>
    <name type="primary">MX1</name>
</gene>
<sequence length="648" mass="74805">MVHSDLGIEELDSPESSLNGSEDMESKSNLYSQYEEKVRPCIDLIDSLRSLGVEQDLALPAIAVIGDQSSGKSSVLEALSGVALPRGSGIVTRCPLVLRLKKLGNEDEWKGKVSFLDKEIEIPDASQVEKEISEAQIAIAGEGTGISHELISLEVSSPHVPDLTLIDLPGITRVAVGNQPPDIEYQIKSLIRKYILRQETINLVVVPANVDIATTEALRMAQEVDPQGDRTIGILTKPDLVDKGTEDKVVDVVRNLVFHLKKGYMIVKCRGQQDIKHRMSLDKALQRERIFFEDHAHFRDLLEEGKATIPCLAERLTSELIMHICKTLPLLENQIKETHQRITEELQKYGKDIPEEESEKMFCLIEKIDTFNKEIISTIEGEEFVEQYDSRLFTKVRAEFSKWSAVVEKNFEKGYEAIRKEIKQFENRYRGRELPGFVNYKTFETIIKKQVRVLEEPAVDMLHTVTDIIRNTFTDVSGKHFNEFFNLHRTAKSKIEDIRLEQENEAEKSIRLHFQMEQLVYCQDQVYRRALQQVREKEAEEEKNKKSNHYFQSQVSEPSTDEIFQHLTAYQQEVSTRISGHIPLIIQFFVLRTYGEQLKKSMLQLLQDKDQYDWLLKERTDTRDKRKFLKERLERLTRARQRLAKFPG</sequence>
<feature type="chain" id="PRO_0000206590" description="Interferon-induced GTP-binding protein Mx1">
    <location>
        <begin position="1"/>
        <end position="648"/>
    </location>
</feature>
<feature type="domain" description="Dynamin-type G" evidence="5">
    <location>
        <begin position="56"/>
        <end position="329"/>
    </location>
</feature>
<feature type="domain" description="GED" evidence="4">
    <location>
        <begin position="560"/>
        <end position="648"/>
    </location>
</feature>
<feature type="region of interest" description="Disordered" evidence="6">
    <location>
        <begin position="1"/>
        <end position="26"/>
    </location>
</feature>
<feature type="region of interest" description="G1 motif" evidence="5">
    <location>
        <begin position="66"/>
        <end position="73"/>
    </location>
</feature>
<feature type="region of interest" description="G2 motif" evidence="5">
    <location>
        <begin position="91"/>
        <end position="93"/>
    </location>
</feature>
<feature type="region of interest" description="G3 motif" evidence="5">
    <location>
        <begin position="167"/>
        <end position="170"/>
    </location>
</feature>
<feature type="region of interest" description="G4 motif" evidence="5">
    <location>
        <begin position="236"/>
        <end position="239"/>
    </location>
</feature>
<feature type="region of interest" description="G5 motif" evidence="5">
    <location>
        <begin position="268"/>
        <end position="271"/>
    </location>
</feature>
<feature type="region of interest" description="Bundle signaling element (BSE)" evidence="1">
    <location>
        <begin position="330"/>
        <end position="355"/>
    </location>
</feature>
<feature type="region of interest" description="Middle domain" evidence="1">
    <location>
        <begin position="355"/>
        <end position="522"/>
    </location>
</feature>
<feature type="region of interest" description="Stalk" evidence="1">
    <location>
        <begin position="356"/>
        <end position="618"/>
    </location>
</feature>
<feature type="region of interest" description="Critical for lipid-binding" evidence="1">
    <location>
        <begin position="543"/>
        <end position="546"/>
    </location>
</feature>
<feature type="binding site" evidence="3">
    <location>
        <begin position="66"/>
        <end position="73"/>
    </location>
    <ligand>
        <name>GTP</name>
        <dbReference type="ChEBI" id="CHEBI:37565"/>
    </ligand>
</feature>
<feature type="binding site" evidence="3">
    <location>
        <begin position="167"/>
        <end position="171"/>
    </location>
    <ligand>
        <name>GTP</name>
        <dbReference type="ChEBI" id="CHEBI:37565"/>
    </ligand>
</feature>
<feature type="binding site" evidence="3">
    <location>
        <begin position="236"/>
        <end position="239"/>
    </location>
    <ligand>
        <name>GTP</name>
        <dbReference type="ChEBI" id="CHEBI:37565"/>
    </ligand>
</feature>
<feature type="modified residue" description="N-acetylmethionine" evidence="2">
    <location>
        <position position="1"/>
    </location>
</feature>
<feature type="splice variant" id="VSP_031549" description="In isoform 2." evidence="13">
    <original>MVHSDLGIEELDSPESSLNGSEDME</original>
    <variation>MLGVMGGRRRRGRRRMRCLDGITDSMDE</variation>
    <location>
        <begin position="1"/>
        <end position="25"/>
    </location>
</feature>
<feature type="sequence variant" description="In allele Mx1-a." evidence="12">
    <original>M</original>
    <variation>MVREHET</variation>
    <location>
        <position position="24"/>
    </location>
</feature>
<feature type="sequence variant" evidence="7 10">
    <original>I</original>
    <variation>M</variation>
    <location>
        <position position="120"/>
    </location>
</feature>
<feature type="sequence conflict" description="In Ref. 1; AAC13166." evidence="14" ref="1">
    <original>L</original>
    <variation>P</variation>
    <location>
        <position position="364"/>
    </location>
</feature>
<accession>P79135</accession>
<accession>O46623</accession>
<accession>Q17QZ1</accession>
<accession>Q53ZW3</accession>
<accession>Q867D5</accession>
<dbReference type="EMBL" id="U88329">
    <property type="protein sequence ID" value="AAC18655.1"/>
    <property type="molecule type" value="mRNA"/>
</dbReference>
<dbReference type="EMBL" id="AF047692">
    <property type="protein sequence ID" value="AAC13166.1"/>
    <property type="molecule type" value="mRNA"/>
</dbReference>
<dbReference type="EMBL" id="AB060169">
    <property type="protein sequence ID" value="BAC56980.1"/>
    <property type="molecule type" value="mRNA"/>
</dbReference>
<dbReference type="EMBL" id="AY251202">
    <property type="protein sequence ID" value="AAO74571.1"/>
    <property type="molecule type" value="Genomic_DNA"/>
</dbReference>
<dbReference type="EMBL" id="AY251194">
    <property type="protein sequence ID" value="AAO74571.1"/>
    <property type="status" value="JOINED"/>
    <property type="molecule type" value="Genomic_DNA"/>
</dbReference>
<dbReference type="EMBL" id="AY251195">
    <property type="protein sequence ID" value="AAO74571.1"/>
    <property type="status" value="JOINED"/>
    <property type="molecule type" value="Genomic_DNA"/>
</dbReference>
<dbReference type="EMBL" id="AY251196">
    <property type="protein sequence ID" value="AAO74571.1"/>
    <property type="status" value="JOINED"/>
    <property type="molecule type" value="Genomic_DNA"/>
</dbReference>
<dbReference type="EMBL" id="AY251197">
    <property type="protein sequence ID" value="AAO74571.1"/>
    <property type="status" value="JOINED"/>
    <property type="molecule type" value="Genomic_DNA"/>
</dbReference>
<dbReference type="EMBL" id="AY251198">
    <property type="protein sequence ID" value="AAO74571.1"/>
    <property type="status" value="JOINED"/>
    <property type="molecule type" value="Genomic_DNA"/>
</dbReference>
<dbReference type="EMBL" id="AY251199">
    <property type="protein sequence ID" value="AAO74571.1"/>
    <property type="status" value="JOINED"/>
    <property type="molecule type" value="Genomic_DNA"/>
</dbReference>
<dbReference type="EMBL" id="AY251200">
    <property type="protein sequence ID" value="AAO74571.1"/>
    <property type="status" value="JOINED"/>
    <property type="molecule type" value="Genomic_DNA"/>
</dbReference>
<dbReference type="EMBL" id="AY251201">
    <property type="protein sequence ID" value="AAO74571.1"/>
    <property type="status" value="JOINED"/>
    <property type="molecule type" value="Genomic_DNA"/>
</dbReference>
<dbReference type="EMBL" id="BC118109">
    <property type="protein sequence ID" value="AAI18110.1"/>
    <property type="molecule type" value="mRNA"/>
</dbReference>
<dbReference type="RefSeq" id="NP_776365.1">
    <molecule id="P79135-1"/>
    <property type="nucleotide sequence ID" value="NM_173940.2"/>
</dbReference>
<dbReference type="RefSeq" id="XP_005202046.1">
    <property type="nucleotide sequence ID" value="XM_005201989.3"/>
</dbReference>
<dbReference type="RefSeq" id="XP_015329109.1">
    <molecule id="P79135-2"/>
    <property type="nucleotide sequence ID" value="XM_015473623.3"/>
</dbReference>
<dbReference type="RefSeq" id="XP_059741234.1">
    <molecule id="P79135-2"/>
    <property type="nucleotide sequence ID" value="XM_059885251.1"/>
</dbReference>
<dbReference type="SMR" id="P79135"/>
<dbReference type="FunCoup" id="P79135">
    <property type="interactions" value="52"/>
</dbReference>
<dbReference type="STRING" id="9913.ENSBTAP00000041289"/>
<dbReference type="PaxDb" id="9913-ENSBTAP00000041289"/>
<dbReference type="Ensembl" id="ENSBTAT00000043742.3">
    <molecule id="P79135-2"/>
    <property type="protein sequence ID" value="ENSBTAP00000041289.2"/>
    <property type="gene ID" value="ENSBTAG00000030913.5"/>
</dbReference>
<dbReference type="GeneID" id="280872"/>
<dbReference type="KEGG" id="bta:280872"/>
<dbReference type="CTD" id="4599"/>
<dbReference type="VEuPathDB" id="HostDB:ENSBTAG00000030913"/>
<dbReference type="eggNOG" id="KOG0446">
    <property type="taxonomic scope" value="Eukaryota"/>
</dbReference>
<dbReference type="GeneTree" id="ENSGT00940000155686"/>
<dbReference type="HOGENOM" id="CLU_008964_8_0_1"/>
<dbReference type="InParanoid" id="P79135"/>
<dbReference type="OMA" id="EFHKWSA"/>
<dbReference type="OrthoDB" id="5061070at2759"/>
<dbReference type="TreeFam" id="TF331484"/>
<dbReference type="Reactome" id="R-BTA-1169408">
    <property type="pathway name" value="ISG15 antiviral mechanism"/>
</dbReference>
<dbReference type="Proteomes" id="UP000009136">
    <property type="component" value="Chromosome 1"/>
</dbReference>
<dbReference type="Bgee" id="ENSBTAG00000030913">
    <property type="expression patterns" value="Expressed in abomasum and 105 other cell types or tissues"/>
</dbReference>
<dbReference type="GO" id="GO:0005737">
    <property type="term" value="C:cytoplasm"/>
    <property type="evidence" value="ECO:0000314"/>
    <property type="project" value="UniProtKB"/>
</dbReference>
<dbReference type="GO" id="GO:0005789">
    <property type="term" value="C:endoplasmic reticulum membrane"/>
    <property type="evidence" value="ECO:0007669"/>
    <property type="project" value="UniProtKB-SubCell"/>
</dbReference>
<dbReference type="GO" id="GO:0005874">
    <property type="term" value="C:microtubule"/>
    <property type="evidence" value="ECO:0000318"/>
    <property type="project" value="GO_Central"/>
</dbReference>
<dbReference type="GO" id="GO:0005634">
    <property type="term" value="C:nucleus"/>
    <property type="evidence" value="ECO:0000314"/>
    <property type="project" value="UniProtKB"/>
</dbReference>
<dbReference type="GO" id="GO:0048471">
    <property type="term" value="C:perinuclear region of cytoplasm"/>
    <property type="evidence" value="ECO:0007669"/>
    <property type="project" value="UniProtKB-SubCell"/>
</dbReference>
<dbReference type="GO" id="GO:0005886">
    <property type="term" value="C:plasma membrane"/>
    <property type="evidence" value="ECO:0000318"/>
    <property type="project" value="GO_Central"/>
</dbReference>
<dbReference type="GO" id="GO:0098793">
    <property type="term" value="C:presynapse"/>
    <property type="evidence" value="ECO:0007669"/>
    <property type="project" value="GOC"/>
</dbReference>
<dbReference type="GO" id="GO:0045202">
    <property type="term" value="C:synapse"/>
    <property type="evidence" value="ECO:0000318"/>
    <property type="project" value="GO_Central"/>
</dbReference>
<dbReference type="GO" id="GO:0005525">
    <property type="term" value="F:GTP binding"/>
    <property type="evidence" value="ECO:0007669"/>
    <property type="project" value="UniProtKB-KW"/>
</dbReference>
<dbReference type="GO" id="GO:0003924">
    <property type="term" value="F:GTPase activity"/>
    <property type="evidence" value="ECO:0000318"/>
    <property type="project" value="GO_Central"/>
</dbReference>
<dbReference type="GO" id="GO:0008017">
    <property type="term" value="F:microtubule binding"/>
    <property type="evidence" value="ECO:0000318"/>
    <property type="project" value="GO_Central"/>
</dbReference>
<dbReference type="GO" id="GO:0051607">
    <property type="term" value="P:defense response to virus"/>
    <property type="evidence" value="ECO:0000318"/>
    <property type="project" value="GO_Central"/>
</dbReference>
<dbReference type="GO" id="GO:0045087">
    <property type="term" value="P:innate immune response"/>
    <property type="evidence" value="ECO:0000304"/>
    <property type="project" value="UniProtKB"/>
</dbReference>
<dbReference type="GO" id="GO:0045071">
    <property type="term" value="P:negative regulation of viral genome replication"/>
    <property type="evidence" value="ECO:0000314"/>
    <property type="project" value="UniProtKB"/>
</dbReference>
<dbReference type="GO" id="GO:0031623">
    <property type="term" value="P:receptor internalization"/>
    <property type="evidence" value="ECO:0000318"/>
    <property type="project" value="GO_Central"/>
</dbReference>
<dbReference type="GO" id="GO:0034340">
    <property type="term" value="P:response to type I interferon"/>
    <property type="evidence" value="ECO:0000304"/>
    <property type="project" value="UniProtKB"/>
</dbReference>
<dbReference type="GO" id="GO:0034342">
    <property type="term" value="P:response to type III interferon"/>
    <property type="evidence" value="ECO:0000304"/>
    <property type="project" value="UniProtKB"/>
</dbReference>
<dbReference type="GO" id="GO:0009615">
    <property type="term" value="P:response to virus"/>
    <property type="evidence" value="ECO:0000314"/>
    <property type="project" value="UniProtKB"/>
</dbReference>
<dbReference type="GO" id="GO:0016185">
    <property type="term" value="P:synaptic vesicle budding from presynaptic endocytic zone membrane"/>
    <property type="evidence" value="ECO:0000318"/>
    <property type="project" value="GO_Central"/>
</dbReference>
<dbReference type="CDD" id="cd08771">
    <property type="entry name" value="DLP_1"/>
    <property type="match status" value="1"/>
</dbReference>
<dbReference type="FunFam" id="1.20.120.1240:FF:000007">
    <property type="entry name" value="Interferon-induced GTP-binding protein Mx1"/>
    <property type="match status" value="1"/>
</dbReference>
<dbReference type="FunFam" id="3.40.50.300:FF:000621">
    <property type="entry name" value="Interferon-induced GTP-binding protein Mx1"/>
    <property type="match status" value="1"/>
</dbReference>
<dbReference type="Gene3D" id="1.20.120.1240">
    <property type="entry name" value="Dynamin, middle domain"/>
    <property type="match status" value="2"/>
</dbReference>
<dbReference type="Gene3D" id="3.40.50.300">
    <property type="entry name" value="P-loop containing nucleotide triphosphate hydrolases"/>
    <property type="match status" value="1"/>
</dbReference>
<dbReference type="InterPro" id="IPR022812">
    <property type="entry name" value="Dynamin"/>
</dbReference>
<dbReference type="InterPro" id="IPR001401">
    <property type="entry name" value="Dynamin_GTPase"/>
</dbReference>
<dbReference type="InterPro" id="IPR019762">
    <property type="entry name" value="Dynamin_GTPase_CS"/>
</dbReference>
<dbReference type="InterPro" id="IPR045063">
    <property type="entry name" value="Dynamin_N"/>
</dbReference>
<dbReference type="InterPro" id="IPR000375">
    <property type="entry name" value="Dynamin_stalk"/>
</dbReference>
<dbReference type="InterPro" id="IPR030381">
    <property type="entry name" value="G_DYNAMIN_dom"/>
</dbReference>
<dbReference type="InterPro" id="IPR003130">
    <property type="entry name" value="GED"/>
</dbReference>
<dbReference type="InterPro" id="IPR020850">
    <property type="entry name" value="GED_dom"/>
</dbReference>
<dbReference type="InterPro" id="IPR027417">
    <property type="entry name" value="P-loop_NTPase"/>
</dbReference>
<dbReference type="PANTHER" id="PTHR11566">
    <property type="entry name" value="DYNAMIN"/>
    <property type="match status" value="1"/>
</dbReference>
<dbReference type="PANTHER" id="PTHR11566:SF217">
    <property type="entry name" value="INTERFERON-INDUCED GTP-BINDING PROTEIN MX1"/>
    <property type="match status" value="1"/>
</dbReference>
<dbReference type="Pfam" id="PF01031">
    <property type="entry name" value="Dynamin_M"/>
    <property type="match status" value="1"/>
</dbReference>
<dbReference type="Pfam" id="PF00350">
    <property type="entry name" value="Dynamin_N"/>
    <property type="match status" value="1"/>
</dbReference>
<dbReference type="Pfam" id="PF02212">
    <property type="entry name" value="GED"/>
    <property type="match status" value="1"/>
</dbReference>
<dbReference type="PRINTS" id="PR00195">
    <property type="entry name" value="DYNAMIN"/>
</dbReference>
<dbReference type="SMART" id="SM00053">
    <property type="entry name" value="DYNc"/>
    <property type="match status" value="1"/>
</dbReference>
<dbReference type="SMART" id="SM00302">
    <property type="entry name" value="GED"/>
    <property type="match status" value="1"/>
</dbReference>
<dbReference type="SUPFAM" id="SSF52540">
    <property type="entry name" value="P-loop containing nucleoside triphosphate hydrolases"/>
    <property type="match status" value="1"/>
</dbReference>
<dbReference type="PROSITE" id="PS00410">
    <property type="entry name" value="G_DYNAMIN_1"/>
    <property type="match status" value="1"/>
</dbReference>
<dbReference type="PROSITE" id="PS51718">
    <property type="entry name" value="G_DYNAMIN_2"/>
    <property type="match status" value="1"/>
</dbReference>
<dbReference type="PROSITE" id="PS51388">
    <property type="entry name" value="GED"/>
    <property type="match status" value="1"/>
</dbReference>
<organism>
    <name type="scientific">Bos taurus</name>
    <name type="common">Bovine</name>
    <dbReference type="NCBI Taxonomy" id="9913"/>
    <lineage>
        <taxon>Eukaryota</taxon>
        <taxon>Metazoa</taxon>
        <taxon>Chordata</taxon>
        <taxon>Craniata</taxon>
        <taxon>Vertebrata</taxon>
        <taxon>Euteleostomi</taxon>
        <taxon>Mammalia</taxon>
        <taxon>Eutheria</taxon>
        <taxon>Laurasiatheria</taxon>
        <taxon>Artiodactyla</taxon>
        <taxon>Ruminantia</taxon>
        <taxon>Pecora</taxon>
        <taxon>Bovidae</taxon>
        <taxon>Bovinae</taxon>
        <taxon>Bos</taxon>
    </lineage>
</organism>
<protein>
    <recommendedName>
        <fullName>Interferon-induced GTP-binding protein Mx1</fullName>
    </recommendedName>
    <alternativeName>
        <fullName>Myxoma resistance protein 1</fullName>
    </alternativeName>
    <alternativeName>
        <fullName>Myxovirus resistance protein 1</fullName>
    </alternativeName>
</protein>